<gene>
    <name evidence="1" type="primary">pdaD</name>
    <name type="ordered locus">MTH_870</name>
</gene>
<dbReference type="EC" id="4.1.1.19" evidence="1"/>
<dbReference type="EMBL" id="AE000666">
    <property type="protein sequence ID" value="AAB85368.1"/>
    <property type="molecule type" value="Genomic_DNA"/>
</dbReference>
<dbReference type="PIR" id="C69216">
    <property type="entry name" value="C69216"/>
</dbReference>
<dbReference type="SMR" id="O26956"/>
<dbReference type="STRING" id="187420.MTH_870"/>
<dbReference type="PaxDb" id="187420-MTH_870"/>
<dbReference type="EnsemblBacteria" id="AAB85368">
    <property type="protein sequence ID" value="AAB85368"/>
    <property type="gene ID" value="MTH_870"/>
</dbReference>
<dbReference type="KEGG" id="mth:MTH_870"/>
<dbReference type="PATRIC" id="fig|187420.15.peg.854"/>
<dbReference type="HOGENOM" id="CLU_114389_2_0_2"/>
<dbReference type="InParanoid" id="O26956"/>
<dbReference type="Proteomes" id="UP000005223">
    <property type="component" value="Chromosome"/>
</dbReference>
<dbReference type="GO" id="GO:0008792">
    <property type="term" value="F:arginine decarboxylase activity"/>
    <property type="evidence" value="ECO:0007669"/>
    <property type="project" value="UniProtKB-UniRule"/>
</dbReference>
<dbReference type="GO" id="GO:0006527">
    <property type="term" value="P:arginine catabolic process"/>
    <property type="evidence" value="ECO:0007669"/>
    <property type="project" value="InterPro"/>
</dbReference>
<dbReference type="Gene3D" id="3.30.60.30">
    <property type="match status" value="1"/>
</dbReference>
<dbReference type="Gene3D" id="3.50.20.10">
    <property type="entry name" value="Pyruvoyl-Dependent Histidine Decarboxylase, subunit B"/>
    <property type="match status" value="1"/>
</dbReference>
<dbReference type="HAMAP" id="MF_01404">
    <property type="entry name" value="PvlArgDC"/>
    <property type="match status" value="1"/>
</dbReference>
<dbReference type="InterPro" id="IPR016104">
    <property type="entry name" value="Pyr-dep_his/arg-deCO2ase"/>
</dbReference>
<dbReference type="InterPro" id="IPR016105">
    <property type="entry name" value="Pyr-dep_his/arg-deCO2ase_sand"/>
</dbReference>
<dbReference type="InterPro" id="IPR002724">
    <property type="entry name" value="Pyruvoyl-dep_arg_deCO2ase"/>
</dbReference>
<dbReference type="NCBIfam" id="TIGR00286">
    <property type="entry name" value="pyruvoyl-dependent arginine decarboxylase"/>
    <property type="match status" value="1"/>
</dbReference>
<dbReference type="PANTHER" id="PTHR40438">
    <property type="entry name" value="PYRUVOYL-DEPENDENT ARGININE DECARBOXYLASE"/>
    <property type="match status" value="1"/>
</dbReference>
<dbReference type="PANTHER" id="PTHR40438:SF1">
    <property type="entry name" value="PYRUVOYL-DEPENDENT ARGININE DECARBOXYLASE"/>
    <property type="match status" value="1"/>
</dbReference>
<dbReference type="Pfam" id="PF01862">
    <property type="entry name" value="PvlArgDC"/>
    <property type="match status" value="1"/>
</dbReference>
<dbReference type="PIRSF" id="PIRSF005216">
    <property type="entry name" value="Pyruvoyl-dep_arg_deCO2ase"/>
    <property type="match status" value="1"/>
</dbReference>
<dbReference type="SFLD" id="SFLDF00471">
    <property type="entry name" value="Pyruvoyl-dependent_arginine_de"/>
    <property type="match status" value="1"/>
</dbReference>
<dbReference type="SFLD" id="SFLDG01170">
    <property type="entry name" value="Pyruvoyl-dependent_arginine_de"/>
    <property type="match status" value="1"/>
</dbReference>
<dbReference type="SFLD" id="SFLDS00055">
    <property type="entry name" value="Pyruvoyl-Dependent_Histidine/A"/>
    <property type="match status" value="1"/>
</dbReference>
<dbReference type="SUPFAM" id="SSF56271">
    <property type="entry name" value="Pyruvoyl-dependent histidine and arginine decarboxylases"/>
    <property type="match status" value="1"/>
</dbReference>
<name>PDAD_METTH</name>
<accession>O26956</accession>
<reference key="1">
    <citation type="journal article" date="1997" name="J. Bacteriol.">
        <title>Complete genome sequence of Methanobacterium thermoautotrophicum deltaH: functional analysis and comparative genomics.</title>
        <authorList>
            <person name="Smith D.R."/>
            <person name="Doucette-Stamm L.A."/>
            <person name="Deloughery C."/>
            <person name="Lee H.-M."/>
            <person name="Dubois J."/>
            <person name="Aldredge T."/>
            <person name="Bashirzadeh R."/>
            <person name="Blakely D."/>
            <person name="Cook R."/>
            <person name="Gilbert K."/>
            <person name="Harrison D."/>
            <person name="Hoang L."/>
            <person name="Keagle P."/>
            <person name="Lumm W."/>
            <person name="Pothier B."/>
            <person name="Qiu D."/>
            <person name="Spadafora R."/>
            <person name="Vicare R."/>
            <person name="Wang Y."/>
            <person name="Wierzbowski J."/>
            <person name="Gibson R."/>
            <person name="Jiwani N."/>
            <person name="Caruso A."/>
            <person name="Bush D."/>
            <person name="Safer H."/>
            <person name="Patwell D."/>
            <person name="Prabhakar S."/>
            <person name="McDougall S."/>
            <person name="Shimer G."/>
            <person name="Goyal A."/>
            <person name="Pietrovski S."/>
            <person name="Church G.M."/>
            <person name="Daniels C.J."/>
            <person name="Mao J.-I."/>
            <person name="Rice P."/>
            <person name="Noelling J."/>
            <person name="Reeve J.N."/>
        </authorList>
    </citation>
    <scope>NUCLEOTIDE SEQUENCE [LARGE SCALE GENOMIC DNA]</scope>
    <source>
        <strain>ATCC 29096 / DSM 1053 / JCM 10044 / NBRC 100330 / Delta H</strain>
    </source>
</reference>
<evidence type="ECO:0000255" key="1">
    <source>
        <dbReference type="HAMAP-Rule" id="MF_01404"/>
    </source>
</evidence>
<keyword id="KW-0210">Decarboxylase</keyword>
<keyword id="KW-0456">Lyase</keyword>
<keyword id="KW-0670">Pyruvate</keyword>
<keyword id="KW-1185">Reference proteome</keyword>
<comment type="catalytic activity">
    <reaction evidence="1">
        <text>L-arginine + H(+) = agmatine + CO2</text>
        <dbReference type="Rhea" id="RHEA:17641"/>
        <dbReference type="ChEBI" id="CHEBI:15378"/>
        <dbReference type="ChEBI" id="CHEBI:16526"/>
        <dbReference type="ChEBI" id="CHEBI:32682"/>
        <dbReference type="ChEBI" id="CHEBI:58145"/>
        <dbReference type="EC" id="4.1.1.19"/>
    </reaction>
</comment>
<comment type="cofactor">
    <cofactor evidence="1">
        <name>pyruvate</name>
        <dbReference type="ChEBI" id="CHEBI:15361"/>
    </cofactor>
    <text evidence="1">Binds 1 pyruvoyl group covalently per subunit.</text>
</comment>
<comment type="similarity">
    <text evidence="1">Belongs to the PdaD family.</text>
</comment>
<feature type="chain" id="PRO_0000023324" description="Pyruvoyl-dependent arginine decarboxylase subunit beta" evidence="1">
    <location>
        <begin position="1"/>
        <end position="41"/>
    </location>
</feature>
<feature type="chain" id="PRO_0000023325" description="Pyruvoyl-dependent arginine decarboxylase subunit alpha" evidence="1">
    <location>
        <begin position="42"/>
        <end position="151"/>
    </location>
</feature>
<feature type="site" description="Cleavage (non-hydrolytic)" evidence="1">
    <location>
        <begin position="41"/>
        <end position="42"/>
    </location>
</feature>
<feature type="modified residue" description="Pyruvic acid (Ser)" evidence="1">
    <location>
        <position position="42"/>
    </location>
</feature>
<protein>
    <recommendedName>
        <fullName evidence="1">Pyruvoyl-dependent arginine decarboxylase</fullName>
        <shortName evidence="1">PvlArgDC</shortName>
        <ecNumber evidence="1">4.1.1.19</ecNumber>
    </recommendedName>
    <component>
        <recommendedName>
            <fullName evidence="1">Pyruvoyl-dependent arginine decarboxylase subunit beta</fullName>
        </recommendedName>
    </component>
    <component>
        <recommendedName>
            <fullName evidence="1">Pyruvoyl-dependent arginine decarboxylase subunit alpha</fullName>
        </recommendedName>
    </component>
</protein>
<organism>
    <name type="scientific">Methanothermobacter thermautotrophicus (strain ATCC 29096 / DSM 1053 / JCM 10044 / NBRC 100330 / Delta H)</name>
    <name type="common">Methanobacterium thermoautotrophicum</name>
    <dbReference type="NCBI Taxonomy" id="187420"/>
    <lineage>
        <taxon>Archaea</taxon>
        <taxon>Methanobacteriati</taxon>
        <taxon>Methanobacteriota</taxon>
        <taxon>Methanomada group</taxon>
        <taxon>Methanobacteria</taxon>
        <taxon>Methanobacteriales</taxon>
        <taxon>Methanobacteriaceae</taxon>
        <taxon>Methanothermobacter</taxon>
    </lineage>
</organism>
<proteinExistence type="inferred from homology"/>
<sequence length="151" mass="16114">MVIVMKVAITSGAAEGPTKLNAFDNALLQAGIGDVNLIKVSSILPRNTRIVELPELEPGSIVNCVLSHMVSERRGDLISAAVAVATSSDFGCVVENSSVNRDPEDVRSEAISMVRYMMSVRGLEIKELIVEETNHVVEKCGAAVSAVVYLD</sequence>